<accession>B0RN90</accession>
<dbReference type="EMBL" id="AM920689">
    <property type="protein sequence ID" value="CAP49925.1"/>
    <property type="molecule type" value="Genomic_DNA"/>
</dbReference>
<dbReference type="SMR" id="B0RN90"/>
<dbReference type="KEGG" id="xca:xcc-b100_0590"/>
<dbReference type="HOGENOM" id="CLU_173135_0_0_6"/>
<dbReference type="Proteomes" id="UP000001188">
    <property type="component" value="Chromosome"/>
</dbReference>
<dbReference type="GO" id="GO:0005737">
    <property type="term" value="C:cytoplasm"/>
    <property type="evidence" value="ECO:0007669"/>
    <property type="project" value="UniProtKB-SubCell"/>
</dbReference>
<dbReference type="GO" id="GO:0000036">
    <property type="term" value="F:acyl carrier activity"/>
    <property type="evidence" value="ECO:0007669"/>
    <property type="project" value="UniProtKB-UniRule"/>
</dbReference>
<dbReference type="HAMAP" id="MF_00710">
    <property type="entry name" value="Malonate_deCO2ase_dsu"/>
    <property type="match status" value="1"/>
</dbReference>
<dbReference type="InterPro" id="IPR023439">
    <property type="entry name" value="Mal_deCO2ase/Cit_lyase_ACP"/>
</dbReference>
<dbReference type="InterPro" id="IPR009662">
    <property type="entry name" value="Malonate_deCO2ase_dsu"/>
</dbReference>
<dbReference type="NCBIfam" id="TIGR03130">
    <property type="entry name" value="malonate_delta"/>
    <property type="match status" value="1"/>
</dbReference>
<dbReference type="Pfam" id="PF06857">
    <property type="entry name" value="ACP"/>
    <property type="match status" value="1"/>
</dbReference>
<proteinExistence type="inferred from homology"/>
<keyword id="KW-0963">Cytoplasm</keyword>
<keyword id="KW-0597">Phosphoprotein</keyword>
<feature type="chain" id="PRO_1000191177" description="Malonate decarboxylase acyl carrier protein">
    <location>
        <begin position="1"/>
        <end position="105"/>
    </location>
</feature>
<feature type="modified residue" description="O-(phosphoribosyl dephospho-coenzyme A)serine" evidence="1">
    <location>
        <position position="28"/>
    </location>
</feature>
<protein>
    <recommendedName>
        <fullName evidence="1">Malonate decarboxylase acyl carrier protein</fullName>
    </recommendedName>
    <alternativeName>
        <fullName evidence="1">Malonate decarboxylase subunit delta</fullName>
    </alternativeName>
</protein>
<reference key="1">
    <citation type="journal article" date="2008" name="J. Biotechnol.">
        <title>The genome of Xanthomonas campestris pv. campestris B100 and its use for the reconstruction of metabolic pathways involved in xanthan biosynthesis.</title>
        <authorList>
            <person name="Vorhoelter F.-J."/>
            <person name="Schneiker S."/>
            <person name="Goesmann A."/>
            <person name="Krause L."/>
            <person name="Bekel T."/>
            <person name="Kaiser O."/>
            <person name="Linke B."/>
            <person name="Patschkowski T."/>
            <person name="Rueckert C."/>
            <person name="Schmid J."/>
            <person name="Sidhu V.K."/>
            <person name="Sieber V."/>
            <person name="Tauch A."/>
            <person name="Watt S.A."/>
            <person name="Weisshaar B."/>
            <person name="Becker A."/>
            <person name="Niehaus K."/>
            <person name="Puehler A."/>
        </authorList>
    </citation>
    <scope>NUCLEOTIDE SEQUENCE [LARGE SCALE GENOMIC DNA]</scope>
    <source>
        <strain>B100</strain>
    </source>
</reference>
<organism>
    <name type="scientific">Xanthomonas campestris pv. campestris (strain B100)</name>
    <dbReference type="NCBI Taxonomy" id="509169"/>
    <lineage>
        <taxon>Bacteria</taxon>
        <taxon>Pseudomonadati</taxon>
        <taxon>Pseudomonadota</taxon>
        <taxon>Gammaproteobacteria</taxon>
        <taxon>Lysobacterales</taxon>
        <taxon>Lysobacteraceae</taxon>
        <taxon>Xanthomonas</taxon>
    </lineage>
</organism>
<evidence type="ECO:0000255" key="1">
    <source>
        <dbReference type="HAMAP-Rule" id="MF_00710"/>
    </source>
</evidence>
<name>MDCC_XANCB</name>
<gene>
    <name evidence="1" type="primary">mdcC</name>
    <name type="ordered locus">xcc-b100_0590</name>
</gene>
<comment type="function">
    <text evidence="1">Subunit of malonate decarboxylase, it is an acyl carrier protein to which acetyl and malonyl thioester residues are bound via a 2'-(5''-phosphoribosyl)-3'-dephospho-CoA prosthetic group and turn over during the catalytic mechanism.</text>
</comment>
<comment type="subcellular location">
    <subcellularLocation>
        <location evidence="1">Cytoplasm</location>
    </subcellularLocation>
</comment>
<comment type="PTM">
    <text evidence="1">Covalently binds the prosthetic group of malonate decarboxylase.</text>
</comment>
<comment type="similarity">
    <text evidence="1">Belongs to the MdcC family.</text>
</comment>
<sequence length="105" mass="11213">METLRYRFDGRNGARTGLDHALVGVVASGNLEVLVERVPLGGAMEIEIVTAARGFGEIWQAVLDDFAARHSLQDVRISINDVGATPAVVSLRLEQAIDVLQGADA</sequence>